<accession>Q2RKK7</accession>
<organism>
    <name type="scientific">Moorella thermoacetica (strain ATCC 39073 / JCM 9320)</name>
    <dbReference type="NCBI Taxonomy" id="264732"/>
    <lineage>
        <taxon>Bacteria</taxon>
        <taxon>Bacillati</taxon>
        <taxon>Bacillota</taxon>
        <taxon>Clostridia</taxon>
        <taxon>Moorellales</taxon>
        <taxon>Moorellaceae</taxon>
        <taxon>Moorella</taxon>
    </lineage>
</organism>
<feature type="chain" id="PRO_1000020887" description="Protease HtpX homolog">
    <location>
        <begin position="1"/>
        <end position="299"/>
    </location>
</feature>
<feature type="transmembrane region" description="Helical" evidence="1">
    <location>
        <begin position="15"/>
        <end position="35"/>
    </location>
</feature>
<feature type="transmembrane region" description="Helical" evidence="1">
    <location>
        <begin position="37"/>
        <end position="57"/>
    </location>
</feature>
<feature type="transmembrane region" description="Helical" evidence="1">
    <location>
        <begin position="158"/>
        <end position="178"/>
    </location>
</feature>
<feature type="transmembrane region" description="Helical" evidence="1">
    <location>
        <begin position="187"/>
        <end position="207"/>
    </location>
</feature>
<feature type="active site" evidence="1">
    <location>
        <position position="141"/>
    </location>
</feature>
<feature type="binding site" evidence="1">
    <location>
        <position position="140"/>
    </location>
    <ligand>
        <name>Zn(2+)</name>
        <dbReference type="ChEBI" id="CHEBI:29105"/>
        <note>catalytic</note>
    </ligand>
</feature>
<feature type="binding site" evidence="1">
    <location>
        <position position="144"/>
    </location>
    <ligand>
        <name>Zn(2+)</name>
        <dbReference type="ChEBI" id="CHEBI:29105"/>
        <note>catalytic</note>
    </ligand>
</feature>
<feature type="binding site" evidence="1">
    <location>
        <position position="215"/>
    </location>
    <ligand>
        <name>Zn(2+)</name>
        <dbReference type="ChEBI" id="CHEBI:29105"/>
        <note>catalytic</note>
    </ligand>
</feature>
<keyword id="KW-1003">Cell membrane</keyword>
<keyword id="KW-0378">Hydrolase</keyword>
<keyword id="KW-0472">Membrane</keyword>
<keyword id="KW-0479">Metal-binding</keyword>
<keyword id="KW-0482">Metalloprotease</keyword>
<keyword id="KW-0645">Protease</keyword>
<keyword id="KW-0812">Transmembrane</keyword>
<keyword id="KW-1133">Transmembrane helix</keyword>
<keyword id="KW-0862">Zinc</keyword>
<evidence type="ECO:0000255" key="1">
    <source>
        <dbReference type="HAMAP-Rule" id="MF_00188"/>
    </source>
</evidence>
<reference key="1">
    <citation type="journal article" date="2008" name="Environ. Microbiol.">
        <title>The complete genome sequence of Moorella thermoacetica (f. Clostridium thermoaceticum).</title>
        <authorList>
            <person name="Pierce E."/>
            <person name="Xie G."/>
            <person name="Barabote R.D."/>
            <person name="Saunders E."/>
            <person name="Han C.S."/>
            <person name="Detter J.C."/>
            <person name="Richardson P."/>
            <person name="Brettin T.S."/>
            <person name="Das A."/>
            <person name="Ljungdahl L.G."/>
            <person name="Ragsdale S.W."/>
        </authorList>
    </citation>
    <scope>NUCLEOTIDE SEQUENCE [LARGE SCALE GENOMIC DNA]</scope>
    <source>
        <strain>ATCC 39073 / JCM 9320</strain>
    </source>
</reference>
<name>HTPX_MOOTA</name>
<gene>
    <name evidence="1" type="primary">htpX</name>
    <name type="ordered locus">Moth_0714</name>
</gene>
<dbReference type="EC" id="3.4.24.-" evidence="1"/>
<dbReference type="EMBL" id="CP000232">
    <property type="protein sequence ID" value="ABC19032.1"/>
    <property type="molecule type" value="Genomic_DNA"/>
</dbReference>
<dbReference type="RefSeq" id="YP_429575.1">
    <property type="nucleotide sequence ID" value="NC_007644.1"/>
</dbReference>
<dbReference type="SMR" id="Q2RKK7"/>
<dbReference type="STRING" id="264732.Moth_0714"/>
<dbReference type="MEROPS" id="M48.004"/>
<dbReference type="EnsemblBacteria" id="ABC19032">
    <property type="protein sequence ID" value="ABC19032"/>
    <property type="gene ID" value="Moth_0714"/>
</dbReference>
<dbReference type="KEGG" id="mta:Moth_0714"/>
<dbReference type="PATRIC" id="fig|264732.11.peg.765"/>
<dbReference type="eggNOG" id="COG0501">
    <property type="taxonomic scope" value="Bacteria"/>
</dbReference>
<dbReference type="HOGENOM" id="CLU_042266_0_2_9"/>
<dbReference type="OrthoDB" id="15218at2"/>
<dbReference type="GO" id="GO:0005886">
    <property type="term" value="C:plasma membrane"/>
    <property type="evidence" value="ECO:0007669"/>
    <property type="project" value="UniProtKB-SubCell"/>
</dbReference>
<dbReference type="GO" id="GO:0004222">
    <property type="term" value="F:metalloendopeptidase activity"/>
    <property type="evidence" value="ECO:0007669"/>
    <property type="project" value="UniProtKB-UniRule"/>
</dbReference>
<dbReference type="GO" id="GO:0008270">
    <property type="term" value="F:zinc ion binding"/>
    <property type="evidence" value="ECO:0007669"/>
    <property type="project" value="UniProtKB-UniRule"/>
</dbReference>
<dbReference type="GO" id="GO:0006508">
    <property type="term" value="P:proteolysis"/>
    <property type="evidence" value="ECO:0007669"/>
    <property type="project" value="UniProtKB-KW"/>
</dbReference>
<dbReference type="CDD" id="cd07327">
    <property type="entry name" value="M48B_HtpX_like"/>
    <property type="match status" value="1"/>
</dbReference>
<dbReference type="Gene3D" id="3.30.2010.10">
    <property type="entry name" value="Metalloproteases ('zincins'), catalytic domain"/>
    <property type="match status" value="1"/>
</dbReference>
<dbReference type="HAMAP" id="MF_00188">
    <property type="entry name" value="Pept_M48_protease_HtpX"/>
    <property type="match status" value="1"/>
</dbReference>
<dbReference type="InterPro" id="IPR050083">
    <property type="entry name" value="HtpX_protease"/>
</dbReference>
<dbReference type="InterPro" id="IPR022919">
    <property type="entry name" value="Pept_M48_protease_HtpX"/>
</dbReference>
<dbReference type="InterPro" id="IPR001915">
    <property type="entry name" value="Peptidase_M48"/>
</dbReference>
<dbReference type="NCBIfam" id="NF002669">
    <property type="entry name" value="PRK02391.1"/>
    <property type="match status" value="1"/>
</dbReference>
<dbReference type="PANTHER" id="PTHR43221">
    <property type="entry name" value="PROTEASE HTPX"/>
    <property type="match status" value="1"/>
</dbReference>
<dbReference type="PANTHER" id="PTHR43221:SF2">
    <property type="entry name" value="PROTEASE HTPX HOMOLOG"/>
    <property type="match status" value="1"/>
</dbReference>
<dbReference type="Pfam" id="PF01435">
    <property type="entry name" value="Peptidase_M48"/>
    <property type="match status" value="1"/>
</dbReference>
<comment type="cofactor">
    <cofactor evidence="1">
        <name>Zn(2+)</name>
        <dbReference type="ChEBI" id="CHEBI:29105"/>
    </cofactor>
    <text evidence="1">Binds 1 zinc ion per subunit.</text>
</comment>
<comment type="subcellular location">
    <subcellularLocation>
        <location evidence="1">Cell membrane</location>
        <topology evidence="1">Multi-pass membrane protein</topology>
    </subcellularLocation>
</comment>
<comment type="similarity">
    <text evidence="1">Belongs to the peptidase M48B family.</text>
</comment>
<sequence>MRRQLGSDAGLTARMFLTMFLLAALYLFFLAVLWQAGVSYTGIIVFVAIMLGVQYYFSDRMVLWSMGAKEVSPREAPELHALVERLAALADLPKPRVAIVPTPMPNAFATGRNPANAVVAVTTGLMERLTPSELEAVLGHELTHVKNRDMTVLTLASFFATVASFIVQNFFYWGGAFGGGRDRDERNNIMLVYLASLVVWLVSYFLIRALSRYREFAADRGSAILTGSPGQLASALVKISGSMARIPTRDLRQAEAFNAFFIIPALNGNSIMELFSTHPSLERRLAYLRRLEQEMEERR</sequence>
<proteinExistence type="inferred from homology"/>
<protein>
    <recommendedName>
        <fullName evidence="1">Protease HtpX homolog</fullName>
        <ecNumber evidence="1">3.4.24.-</ecNumber>
    </recommendedName>
</protein>